<comment type="function">
    <text evidence="1">Involved in the catabolism of oxalate and in the adapatation to low pH via the induction of the oxalate-dependent acid tolerance response (ATR). Catalyzes the transfer of the CoA moiety from formyl-CoA to oxalate (By similarity).</text>
</comment>
<comment type="catalytic activity">
    <reaction evidence="2">
        <text>formyl-CoA + oxalate = oxalyl-CoA + formate</text>
        <dbReference type="Rhea" id="RHEA:16545"/>
        <dbReference type="ChEBI" id="CHEBI:15740"/>
        <dbReference type="ChEBI" id="CHEBI:30623"/>
        <dbReference type="ChEBI" id="CHEBI:57376"/>
        <dbReference type="ChEBI" id="CHEBI:57388"/>
        <dbReference type="EC" id="2.8.3.16"/>
    </reaction>
</comment>
<comment type="pathway">
    <text evidence="2">Metabolic intermediate degradation; oxalate degradation; CO(2) and formate from oxalate: step 1/2.</text>
</comment>
<comment type="subunit">
    <text evidence="2">Homodimer.</text>
</comment>
<comment type="similarity">
    <text evidence="2">Belongs to the CoA-transferase III family. Frc subfamily.</text>
</comment>
<organism>
    <name type="scientific">Escherichia coli O157:H7</name>
    <dbReference type="NCBI Taxonomy" id="83334"/>
    <lineage>
        <taxon>Bacteria</taxon>
        <taxon>Pseudomonadati</taxon>
        <taxon>Pseudomonadota</taxon>
        <taxon>Gammaproteobacteria</taxon>
        <taxon>Enterobacterales</taxon>
        <taxon>Enterobacteriaceae</taxon>
        <taxon>Escherichia</taxon>
    </lineage>
</organism>
<sequence>MSTPLQGIKVLDFTGVQSGPSCTQMLAWFGADVIKIERPGVGDVTRHQLRDIPDIDALYFTMLNSNKRSIELNTKTAEGKEVMEKLIREADILVENFHPGAIDHMGFTWEHIQEINPRLIFGSIKGFDECSPYVNVKAYENVAQAAGGAASTTGFWDGPPLVSAAALGDSNTGMHLLIGLLAALLHREKTGRGQRVTMSMQDAVLNLCRVKLRDQQRLDKLGYLEEYPQYPNGTFGDAVPRGGNAGGGGQPGWILKCKGWETDPNAYIYFTIQEQNWENTCKAIGKPDWITDPAYSTAHARQPHIFDIFAEIEKYTVTIDKHEAVAYLTQFDIPCAPVLSMKEISLDPSLRQSGSVVEVEQPLRGKYLTVGCPMKFSAFTPDIKAAPLLGEHTAAVLQELGYSDDEIAAMKQNHAI</sequence>
<reference key="1">
    <citation type="journal article" date="2001" name="Nature">
        <title>Genome sequence of enterohaemorrhagic Escherichia coli O157:H7.</title>
        <authorList>
            <person name="Perna N.T."/>
            <person name="Plunkett G. III"/>
            <person name="Burland V."/>
            <person name="Mau B."/>
            <person name="Glasner J.D."/>
            <person name="Rose D.J."/>
            <person name="Mayhew G.F."/>
            <person name="Evans P.S."/>
            <person name="Gregor J."/>
            <person name="Kirkpatrick H.A."/>
            <person name="Posfai G."/>
            <person name="Hackett J."/>
            <person name="Klink S."/>
            <person name="Boutin A."/>
            <person name="Shao Y."/>
            <person name="Miller L."/>
            <person name="Grotbeck E.J."/>
            <person name="Davis N.W."/>
            <person name="Lim A."/>
            <person name="Dimalanta E.T."/>
            <person name="Potamousis K."/>
            <person name="Apodaca J."/>
            <person name="Anantharaman T.S."/>
            <person name="Lin J."/>
            <person name="Yen G."/>
            <person name="Schwartz D.C."/>
            <person name="Welch R.A."/>
            <person name="Blattner F.R."/>
        </authorList>
    </citation>
    <scope>NUCLEOTIDE SEQUENCE [LARGE SCALE GENOMIC DNA]</scope>
    <source>
        <strain>O157:H7 / EDL933 / ATCC 700927 / EHEC</strain>
    </source>
</reference>
<reference key="2">
    <citation type="journal article" date="2001" name="DNA Res.">
        <title>Complete genome sequence of enterohemorrhagic Escherichia coli O157:H7 and genomic comparison with a laboratory strain K-12.</title>
        <authorList>
            <person name="Hayashi T."/>
            <person name="Makino K."/>
            <person name="Ohnishi M."/>
            <person name="Kurokawa K."/>
            <person name="Ishii K."/>
            <person name="Yokoyama K."/>
            <person name="Han C.-G."/>
            <person name="Ohtsubo E."/>
            <person name="Nakayama K."/>
            <person name="Murata T."/>
            <person name="Tanaka M."/>
            <person name="Tobe T."/>
            <person name="Iida T."/>
            <person name="Takami H."/>
            <person name="Honda T."/>
            <person name="Sasakawa C."/>
            <person name="Ogasawara N."/>
            <person name="Yasunaga T."/>
            <person name="Kuhara S."/>
            <person name="Shiba T."/>
            <person name="Hattori M."/>
            <person name="Shinagawa H."/>
        </authorList>
    </citation>
    <scope>NUCLEOTIDE SEQUENCE [LARGE SCALE GENOMIC DNA]</scope>
    <source>
        <strain>O157:H7 / Sakai / RIMD 0509952 / EHEC</strain>
    </source>
</reference>
<protein>
    <recommendedName>
        <fullName>Formyl-CoA:oxalate CoA-transferase</fullName>
        <shortName>FCOCT</shortName>
        <ecNumber evidence="2">2.8.3.16</ecNumber>
    </recommendedName>
    <alternativeName>
        <fullName evidence="2">Formyl-coenzyme A transferase</fullName>
        <shortName evidence="2">Formyl-CoA transferase</shortName>
    </alternativeName>
</protein>
<dbReference type="EC" id="2.8.3.16" evidence="2"/>
<dbReference type="EMBL" id="AE005174">
    <property type="protein sequence ID" value="AAG57500.1"/>
    <property type="molecule type" value="Genomic_DNA"/>
</dbReference>
<dbReference type="EMBL" id="BA000007">
    <property type="protein sequence ID" value="BAB36677.1"/>
    <property type="molecule type" value="Genomic_DNA"/>
</dbReference>
<dbReference type="PIR" id="F91035">
    <property type="entry name" value="F91035"/>
</dbReference>
<dbReference type="PIR" id="H85879">
    <property type="entry name" value="H85879"/>
</dbReference>
<dbReference type="RefSeq" id="NP_311281.1">
    <property type="nucleotide sequence ID" value="NC_002695.1"/>
</dbReference>
<dbReference type="RefSeq" id="WP_000106757.1">
    <property type="nucleotide sequence ID" value="NZ_VOAI01000001.1"/>
</dbReference>
<dbReference type="SMR" id="Q8XBR7"/>
<dbReference type="STRING" id="155864.Z3639"/>
<dbReference type="GeneID" id="915645"/>
<dbReference type="KEGG" id="ece:Z3639"/>
<dbReference type="KEGG" id="ecs:ECs_3254"/>
<dbReference type="PATRIC" id="fig|386585.9.peg.3398"/>
<dbReference type="eggNOG" id="COG1804">
    <property type="taxonomic scope" value="Bacteria"/>
</dbReference>
<dbReference type="HOGENOM" id="CLU_033975_2_1_6"/>
<dbReference type="OMA" id="KFDIPCA"/>
<dbReference type="UniPathway" id="UPA00540">
    <property type="reaction ID" value="UER00598"/>
</dbReference>
<dbReference type="Proteomes" id="UP000000558">
    <property type="component" value="Chromosome"/>
</dbReference>
<dbReference type="Proteomes" id="UP000002519">
    <property type="component" value="Chromosome"/>
</dbReference>
<dbReference type="GO" id="GO:0033608">
    <property type="term" value="F:formyl-CoA transferase activity"/>
    <property type="evidence" value="ECO:0007669"/>
    <property type="project" value="UniProtKB-EC"/>
</dbReference>
<dbReference type="GO" id="GO:0033611">
    <property type="term" value="P:oxalate catabolic process"/>
    <property type="evidence" value="ECO:0007669"/>
    <property type="project" value="UniProtKB-UniRule"/>
</dbReference>
<dbReference type="Gene3D" id="3.40.50.10540">
    <property type="entry name" value="Crotonobetainyl-coa:carnitine coa-transferase, domain 1"/>
    <property type="match status" value="1"/>
</dbReference>
<dbReference type="Gene3D" id="3.30.1540.10">
    <property type="entry name" value="formyl-coa transferase, domain 3"/>
    <property type="match status" value="1"/>
</dbReference>
<dbReference type="HAMAP" id="MF_00742">
    <property type="entry name" value="Formyl_CoA_transfer"/>
    <property type="match status" value="1"/>
</dbReference>
<dbReference type="InterPro" id="IPR050483">
    <property type="entry name" value="CoA-transferase_III_domain"/>
</dbReference>
<dbReference type="InterPro" id="IPR003673">
    <property type="entry name" value="CoA-Trfase_fam_III"/>
</dbReference>
<dbReference type="InterPro" id="IPR044855">
    <property type="entry name" value="CoA-Trfase_III_dom3_sf"/>
</dbReference>
<dbReference type="InterPro" id="IPR023606">
    <property type="entry name" value="CoA-Trfase_III_dom_1_sf"/>
</dbReference>
<dbReference type="InterPro" id="IPR017659">
    <property type="entry name" value="Formyl_CoA_transfer"/>
</dbReference>
<dbReference type="NCBIfam" id="TIGR03253">
    <property type="entry name" value="oxalate_frc"/>
    <property type="match status" value="1"/>
</dbReference>
<dbReference type="NCBIfam" id="NF003809">
    <property type="entry name" value="PRK05398.1"/>
    <property type="match status" value="1"/>
</dbReference>
<dbReference type="PANTHER" id="PTHR48207">
    <property type="entry name" value="SUCCINATE--HYDROXYMETHYLGLUTARATE COA-TRANSFERASE"/>
    <property type="match status" value="1"/>
</dbReference>
<dbReference type="PANTHER" id="PTHR48207:SF3">
    <property type="entry name" value="SUCCINATE--HYDROXYMETHYLGLUTARATE COA-TRANSFERASE"/>
    <property type="match status" value="1"/>
</dbReference>
<dbReference type="Pfam" id="PF02515">
    <property type="entry name" value="CoA_transf_3"/>
    <property type="match status" value="1"/>
</dbReference>
<dbReference type="SUPFAM" id="SSF89796">
    <property type="entry name" value="CoA-transferase family III (CaiB/BaiF)"/>
    <property type="match status" value="1"/>
</dbReference>
<name>FCTA_ECO57</name>
<proteinExistence type="inferred from homology"/>
<keyword id="KW-1185">Reference proteome</keyword>
<keyword id="KW-0808">Transferase</keyword>
<feature type="chain" id="PRO_0000194718" description="Formyl-CoA:oxalate CoA-transferase">
    <location>
        <begin position="1"/>
        <end position="416"/>
    </location>
</feature>
<feature type="active site" description="Nucleophile" evidence="2">
    <location>
        <position position="169"/>
    </location>
</feature>
<feature type="binding site" evidence="1">
    <location>
        <begin position="17"/>
        <end position="18"/>
    </location>
    <ligand>
        <name>CoA</name>
        <dbReference type="ChEBI" id="CHEBI:57287"/>
    </ligand>
</feature>
<feature type="binding site" evidence="2">
    <location>
        <position position="38"/>
    </location>
    <ligand>
        <name>CoA</name>
        <dbReference type="ChEBI" id="CHEBI:57287"/>
    </ligand>
</feature>
<feature type="binding site" evidence="1">
    <location>
        <begin position="72"/>
        <end position="75"/>
    </location>
    <ligand>
        <name>CoA</name>
        <dbReference type="ChEBI" id="CHEBI:57287"/>
    </ligand>
</feature>
<feature type="binding site" evidence="1">
    <location>
        <begin position="96"/>
        <end position="98"/>
    </location>
    <ligand>
        <name>CoA</name>
        <dbReference type="ChEBI" id="CHEBI:57287"/>
    </ligand>
</feature>
<feature type="binding site" evidence="2">
    <location>
        <position position="104"/>
    </location>
    <ligand>
        <name>CoA</name>
        <dbReference type="ChEBI" id="CHEBI:57287"/>
    </ligand>
</feature>
<feature type="binding site" evidence="1">
    <location>
        <begin position="137"/>
        <end position="140"/>
    </location>
    <ligand>
        <name>CoA</name>
        <dbReference type="ChEBI" id="CHEBI:57287"/>
    </ligand>
</feature>
<feature type="binding site" evidence="1">
    <location>
        <begin position="248"/>
        <end position="250"/>
    </location>
    <ligand>
        <name>substrate</name>
    </ligand>
</feature>
<feature type="binding site" evidence="1">
    <location>
        <begin position="273"/>
        <end position="275"/>
    </location>
    <ligand>
        <name>CoA</name>
        <dbReference type="ChEBI" id="CHEBI:57287"/>
    </ligand>
</feature>
<evidence type="ECO:0000250" key="1"/>
<evidence type="ECO:0000255" key="2">
    <source>
        <dbReference type="HAMAP-Rule" id="MF_00742"/>
    </source>
</evidence>
<accession>Q8XBR7</accession>
<gene>
    <name evidence="2" type="primary">frc</name>
    <name type="ordered locus">Z3639</name>
    <name type="ordered locus">ECs3254</name>
</gene>